<feature type="chain" id="PRO_1000046878" description="Large ribosomal subunit protein eL40">
    <location>
        <begin position="1"/>
        <end position="55"/>
    </location>
</feature>
<protein>
    <recommendedName>
        <fullName evidence="1">Large ribosomal subunit protein eL40</fullName>
    </recommendedName>
    <alternativeName>
        <fullName evidence="2">50S ribosomal protein L40e</fullName>
    </alternativeName>
</protein>
<organism>
    <name type="scientific">Ignicoccus hospitalis (strain KIN4/I / DSM 18386 / JCM 14125)</name>
    <dbReference type="NCBI Taxonomy" id="453591"/>
    <lineage>
        <taxon>Archaea</taxon>
        <taxon>Thermoproteota</taxon>
        <taxon>Thermoprotei</taxon>
        <taxon>Desulfurococcales</taxon>
        <taxon>Desulfurococcaceae</taxon>
        <taxon>Ignicoccus</taxon>
    </lineage>
</organism>
<sequence>MPVTDPELVAIVQKRVLKKYVCRKCGALNPWGATKCRRCKSTNLRPKHYELGGKR</sequence>
<keyword id="KW-1185">Reference proteome</keyword>
<keyword id="KW-0687">Ribonucleoprotein</keyword>
<keyword id="KW-0689">Ribosomal protein</keyword>
<dbReference type="EMBL" id="CP000816">
    <property type="protein sequence ID" value="ABU82020.1"/>
    <property type="molecule type" value="Genomic_DNA"/>
</dbReference>
<dbReference type="RefSeq" id="WP_012122984.1">
    <property type="nucleotide sequence ID" value="NC_009776.1"/>
</dbReference>
<dbReference type="SMR" id="A8AAR8"/>
<dbReference type="STRING" id="453591.Igni_0838"/>
<dbReference type="GeneID" id="5563136"/>
<dbReference type="KEGG" id="iho:Igni_0838"/>
<dbReference type="eggNOG" id="arCOG04049">
    <property type="taxonomic scope" value="Archaea"/>
</dbReference>
<dbReference type="HOGENOM" id="CLU_175093_1_0_2"/>
<dbReference type="OrthoDB" id="45138at2157"/>
<dbReference type="PhylomeDB" id="A8AAR8"/>
<dbReference type="Proteomes" id="UP000000262">
    <property type="component" value="Chromosome"/>
</dbReference>
<dbReference type="GO" id="GO:1990904">
    <property type="term" value="C:ribonucleoprotein complex"/>
    <property type="evidence" value="ECO:0007669"/>
    <property type="project" value="UniProtKB-KW"/>
</dbReference>
<dbReference type="GO" id="GO:0005840">
    <property type="term" value="C:ribosome"/>
    <property type="evidence" value="ECO:0007669"/>
    <property type="project" value="UniProtKB-KW"/>
</dbReference>
<dbReference type="GO" id="GO:0003735">
    <property type="term" value="F:structural constituent of ribosome"/>
    <property type="evidence" value="ECO:0007669"/>
    <property type="project" value="InterPro"/>
</dbReference>
<dbReference type="GO" id="GO:0006412">
    <property type="term" value="P:translation"/>
    <property type="evidence" value="ECO:0007669"/>
    <property type="project" value="UniProtKB-UniRule"/>
</dbReference>
<dbReference type="Gene3D" id="4.10.1060.50">
    <property type="match status" value="1"/>
</dbReference>
<dbReference type="HAMAP" id="MF_00788">
    <property type="entry name" value="Ribosomal_eL40"/>
    <property type="match status" value="1"/>
</dbReference>
<dbReference type="InterPro" id="IPR023657">
    <property type="entry name" value="Ribosomal_eL40_arc"/>
</dbReference>
<dbReference type="InterPro" id="IPR001975">
    <property type="entry name" value="Ribosomal_eL40_dom"/>
</dbReference>
<dbReference type="InterPro" id="IPR038587">
    <property type="entry name" value="Ribosomal_eL40_sf"/>
</dbReference>
<dbReference type="InterPro" id="IPR011332">
    <property type="entry name" value="Ribosomal_zn-bd"/>
</dbReference>
<dbReference type="NCBIfam" id="NF003161">
    <property type="entry name" value="PRK04136.1"/>
    <property type="match status" value="1"/>
</dbReference>
<dbReference type="PANTHER" id="PTHR39649">
    <property type="entry name" value="50S RIBOSOMAL PROTEIN L40E"/>
    <property type="match status" value="1"/>
</dbReference>
<dbReference type="PANTHER" id="PTHR39649:SF1">
    <property type="entry name" value="LARGE RIBOSOMAL SUBUNIT PROTEIN EL40"/>
    <property type="match status" value="1"/>
</dbReference>
<dbReference type="Pfam" id="PF01020">
    <property type="entry name" value="Ribosomal_L40e"/>
    <property type="match status" value="1"/>
</dbReference>
<dbReference type="SMART" id="SM01377">
    <property type="entry name" value="Ribosomal_L40e"/>
    <property type="match status" value="1"/>
</dbReference>
<dbReference type="SUPFAM" id="SSF57829">
    <property type="entry name" value="Zn-binding ribosomal proteins"/>
    <property type="match status" value="1"/>
</dbReference>
<comment type="similarity">
    <text evidence="1">Belongs to the eukaryotic ribosomal protein eL40 family.</text>
</comment>
<proteinExistence type="inferred from homology"/>
<evidence type="ECO:0000255" key="1">
    <source>
        <dbReference type="HAMAP-Rule" id="MF_00788"/>
    </source>
</evidence>
<evidence type="ECO:0000305" key="2"/>
<accession>A8AAR8</accession>
<gene>
    <name evidence="1" type="primary">rpl40e</name>
    <name type="ordered locus">Igni_0838</name>
</gene>
<reference key="1">
    <citation type="journal article" date="2008" name="Genome Biol.">
        <title>A genomic analysis of the archaeal system Ignicoccus hospitalis-Nanoarchaeum equitans.</title>
        <authorList>
            <person name="Podar M."/>
            <person name="Anderson I."/>
            <person name="Makarova K.S."/>
            <person name="Elkins J.G."/>
            <person name="Ivanova N."/>
            <person name="Wall M.A."/>
            <person name="Lykidis A."/>
            <person name="Mavromatis K."/>
            <person name="Sun H."/>
            <person name="Hudson M.E."/>
            <person name="Chen W."/>
            <person name="Deciu C."/>
            <person name="Hutchison D."/>
            <person name="Eads J.R."/>
            <person name="Anderson A."/>
            <person name="Fernandes F."/>
            <person name="Szeto E."/>
            <person name="Lapidus A."/>
            <person name="Kyrpides N.C."/>
            <person name="Saier M.H. Jr."/>
            <person name="Richardson P.M."/>
            <person name="Rachel R."/>
            <person name="Huber H."/>
            <person name="Eisen J.A."/>
            <person name="Koonin E.V."/>
            <person name="Keller M."/>
            <person name="Stetter K.O."/>
        </authorList>
    </citation>
    <scope>NUCLEOTIDE SEQUENCE [LARGE SCALE GENOMIC DNA]</scope>
    <source>
        <strain>KIN4/I / DSM 18386 / JCM 14125</strain>
    </source>
</reference>
<name>RL40_IGNH4</name>